<accession>B0TQX3</accession>
<keyword id="KW-0210">Decarboxylase</keyword>
<keyword id="KW-0456">Lyase</keyword>
<keyword id="KW-0460">Magnesium</keyword>
<keyword id="KW-0479">Metal-binding</keyword>
<keyword id="KW-0620">Polyamine biosynthesis</keyword>
<keyword id="KW-0663">Pyridoxal phosphate</keyword>
<keyword id="KW-0745">Spermidine biosynthesis</keyword>
<gene>
    <name evidence="1" type="primary">speA</name>
    <name type="ordered locus">Shal_1803</name>
</gene>
<reference key="1">
    <citation type="submission" date="2008-01" db="EMBL/GenBank/DDBJ databases">
        <title>Complete sequence of Shewanella halifaxensis HAW-EB4.</title>
        <authorList>
            <consortium name="US DOE Joint Genome Institute"/>
            <person name="Copeland A."/>
            <person name="Lucas S."/>
            <person name="Lapidus A."/>
            <person name="Glavina del Rio T."/>
            <person name="Dalin E."/>
            <person name="Tice H."/>
            <person name="Bruce D."/>
            <person name="Goodwin L."/>
            <person name="Pitluck S."/>
            <person name="Sims D."/>
            <person name="Brettin T."/>
            <person name="Detter J.C."/>
            <person name="Han C."/>
            <person name="Kuske C.R."/>
            <person name="Schmutz J."/>
            <person name="Larimer F."/>
            <person name="Land M."/>
            <person name="Hauser L."/>
            <person name="Kyrpides N."/>
            <person name="Kim E."/>
            <person name="Zhao J.-S."/>
            <person name="Richardson P."/>
        </authorList>
    </citation>
    <scope>NUCLEOTIDE SEQUENCE [LARGE SCALE GENOMIC DNA]</scope>
    <source>
        <strain>HAW-EB4</strain>
    </source>
</reference>
<protein>
    <recommendedName>
        <fullName evidence="1">Biosynthetic arginine decarboxylase</fullName>
        <shortName evidence="1">ADC</shortName>
        <ecNumber evidence="1">4.1.1.19</ecNumber>
    </recommendedName>
</protein>
<comment type="function">
    <text evidence="1">Catalyzes the biosynthesis of agmatine from arginine.</text>
</comment>
<comment type="catalytic activity">
    <reaction evidence="1">
        <text>L-arginine + H(+) = agmatine + CO2</text>
        <dbReference type="Rhea" id="RHEA:17641"/>
        <dbReference type="ChEBI" id="CHEBI:15378"/>
        <dbReference type="ChEBI" id="CHEBI:16526"/>
        <dbReference type="ChEBI" id="CHEBI:32682"/>
        <dbReference type="ChEBI" id="CHEBI:58145"/>
        <dbReference type="EC" id="4.1.1.19"/>
    </reaction>
</comment>
<comment type="cofactor">
    <cofactor evidence="1">
        <name>Mg(2+)</name>
        <dbReference type="ChEBI" id="CHEBI:18420"/>
    </cofactor>
</comment>
<comment type="cofactor">
    <cofactor evidence="1">
        <name>pyridoxal 5'-phosphate</name>
        <dbReference type="ChEBI" id="CHEBI:597326"/>
    </cofactor>
</comment>
<comment type="pathway">
    <text evidence="1">Amine and polyamine biosynthesis; agmatine biosynthesis; agmatine from L-arginine: step 1/1.</text>
</comment>
<comment type="similarity">
    <text evidence="1">Belongs to the Orn/Lys/Arg decarboxylase class-II family. SpeA subfamily.</text>
</comment>
<proteinExistence type="inferred from homology"/>
<dbReference type="EC" id="4.1.1.19" evidence="1"/>
<dbReference type="EMBL" id="CP000931">
    <property type="protein sequence ID" value="ABZ76368.1"/>
    <property type="molecule type" value="Genomic_DNA"/>
</dbReference>
<dbReference type="RefSeq" id="WP_012276901.1">
    <property type="nucleotide sequence ID" value="NC_010334.1"/>
</dbReference>
<dbReference type="SMR" id="B0TQX3"/>
<dbReference type="STRING" id="458817.Shal_1803"/>
<dbReference type="KEGG" id="shl:Shal_1803"/>
<dbReference type="eggNOG" id="COG1166">
    <property type="taxonomic scope" value="Bacteria"/>
</dbReference>
<dbReference type="HOGENOM" id="CLU_027243_1_0_6"/>
<dbReference type="OrthoDB" id="9802658at2"/>
<dbReference type="UniPathway" id="UPA00186">
    <property type="reaction ID" value="UER00284"/>
</dbReference>
<dbReference type="Proteomes" id="UP000001317">
    <property type="component" value="Chromosome"/>
</dbReference>
<dbReference type="GO" id="GO:0008792">
    <property type="term" value="F:arginine decarboxylase activity"/>
    <property type="evidence" value="ECO:0007669"/>
    <property type="project" value="UniProtKB-UniRule"/>
</dbReference>
<dbReference type="GO" id="GO:0046872">
    <property type="term" value="F:metal ion binding"/>
    <property type="evidence" value="ECO:0007669"/>
    <property type="project" value="UniProtKB-KW"/>
</dbReference>
<dbReference type="GO" id="GO:0006527">
    <property type="term" value="P:arginine catabolic process"/>
    <property type="evidence" value="ECO:0007669"/>
    <property type="project" value="InterPro"/>
</dbReference>
<dbReference type="GO" id="GO:0033388">
    <property type="term" value="P:putrescine biosynthetic process from arginine"/>
    <property type="evidence" value="ECO:0007669"/>
    <property type="project" value="TreeGrafter"/>
</dbReference>
<dbReference type="GO" id="GO:0008295">
    <property type="term" value="P:spermidine biosynthetic process"/>
    <property type="evidence" value="ECO:0007669"/>
    <property type="project" value="UniProtKB-UniRule"/>
</dbReference>
<dbReference type="CDD" id="cd06830">
    <property type="entry name" value="PLPDE_III_ADC"/>
    <property type="match status" value="1"/>
</dbReference>
<dbReference type="FunFam" id="1.10.287.3440:FF:000001">
    <property type="entry name" value="Biosynthetic arginine decarboxylase"/>
    <property type="match status" value="1"/>
</dbReference>
<dbReference type="FunFam" id="2.40.37.10:FF:000001">
    <property type="entry name" value="Biosynthetic arginine decarboxylase"/>
    <property type="match status" value="1"/>
</dbReference>
<dbReference type="FunFam" id="3.20.20.10:FF:000001">
    <property type="entry name" value="Biosynthetic arginine decarboxylase"/>
    <property type="match status" value="1"/>
</dbReference>
<dbReference type="Gene3D" id="1.10.287.3440">
    <property type="match status" value="1"/>
</dbReference>
<dbReference type="Gene3D" id="1.20.58.930">
    <property type="match status" value="1"/>
</dbReference>
<dbReference type="Gene3D" id="3.20.20.10">
    <property type="entry name" value="Alanine racemase"/>
    <property type="match status" value="1"/>
</dbReference>
<dbReference type="Gene3D" id="2.40.37.10">
    <property type="entry name" value="Lyase, Ornithine Decarboxylase, Chain A, domain 1"/>
    <property type="match status" value="1"/>
</dbReference>
<dbReference type="HAMAP" id="MF_01417">
    <property type="entry name" value="SpeA"/>
    <property type="match status" value="1"/>
</dbReference>
<dbReference type="InterPro" id="IPR009006">
    <property type="entry name" value="Ala_racemase/Decarboxylase_C"/>
</dbReference>
<dbReference type="InterPro" id="IPR040634">
    <property type="entry name" value="Arg_decarb_HB"/>
</dbReference>
<dbReference type="InterPro" id="IPR041128">
    <property type="entry name" value="Arg_decarbox_C"/>
</dbReference>
<dbReference type="InterPro" id="IPR002985">
    <property type="entry name" value="Arg_decrbxlase"/>
</dbReference>
<dbReference type="InterPro" id="IPR022644">
    <property type="entry name" value="De-COase2_N"/>
</dbReference>
<dbReference type="InterPro" id="IPR000183">
    <property type="entry name" value="Orn/DAP/Arg_de-COase"/>
</dbReference>
<dbReference type="InterPro" id="IPR029066">
    <property type="entry name" value="PLP-binding_barrel"/>
</dbReference>
<dbReference type="NCBIfam" id="NF003763">
    <property type="entry name" value="PRK05354.1"/>
    <property type="match status" value="1"/>
</dbReference>
<dbReference type="NCBIfam" id="TIGR01273">
    <property type="entry name" value="speA"/>
    <property type="match status" value="1"/>
</dbReference>
<dbReference type="PANTHER" id="PTHR43295">
    <property type="entry name" value="ARGININE DECARBOXYLASE"/>
    <property type="match status" value="1"/>
</dbReference>
<dbReference type="PANTHER" id="PTHR43295:SF9">
    <property type="entry name" value="BIOSYNTHETIC ARGININE DECARBOXYLASE"/>
    <property type="match status" value="1"/>
</dbReference>
<dbReference type="Pfam" id="PF17810">
    <property type="entry name" value="Arg_decarb_HB"/>
    <property type="match status" value="1"/>
</dbReference>
<dbReference type="Pfam" id="PF17944">
    <property type="entry name" value="Arg_decarbox_C"/>
    <property type="match status" value="1"/>
</dbReference>
<dbReference type="Pfam" id="PF02784">
    <property type="entry name" value="Orn_Arg_deC_N"/>
    <property type="match status" value="1"/>
</dbReference>
<dbReference type="PIRSF" id="PIRSF001336">
    <property type="entry name" value="Arg_decrbxlase"/>
    <property type="match status" value="1"/>
</dbReference>
<dbReference type="PRINTS" id="PR01180">
    <property type="entry name" value="ARGDCRBXLASE"/>
</dbReference>
<dbReference type="PRINTS" id="PR01179">
    <property type="entry name" value="ODADCRBXLASE"/>
</dbReference>
<dbReference type="SUPFAM" id="SSF51419">
    <property type="entry name" value="PLP-binding barrel"/>
    <property type="match status" value="1"/>
</dbReference>
<sequence>MSNWSIDDARASYNVNHWSQGLYGISDDGEVTVSPDPSRPECKIGLNEMAKDMVKSGVALPVLVRFPQILHHRVNSLCQAFNQAIQKYQYENDYLLVYPIKVNQQQTVVEEILASQVEKEVPQLGLEAGSKPELMAVLAMAQKASSVIICNGYKDKEYIRLALIGEKLGHKVYIVLEKISELKVVLEQAKELGVTPRLGLRVRLAFQGKGKWQASGGEKSKFGLSAAQVLQVITSLKQENMLDSLELLHFHLGSQIANIRDIRQGVSEAGRFYCELMKLGANVKCFDVGGGLAVDYDGTRSQSSHSMNYGLTEYANNIVSVLTDMCKEYEQPMPRIISESGRYLTAHHAVLLTDVIGTEAYKPEDIQPPAEDAPQLLHNMWQSWVEVSGKADQRALIEIFHDCQSDLTEVHSLFAVGQVGLAERAWAEQVNLRVCYELQGSMSAKYRFHRPIIDELNEKLADKFFVNFSLFQSLPDAWGIDQVFPVMPLSGLDKAPESRAVMLDITCDSDGTIDQYVDGQGIETTLPVPAWTQESPYLIGFFLVGAYQEILGDMHNLFGDTNSAVVRLDEDARTNVESVLAGDTVADVLRYVNLDAVSFMRTYEELVNKHIAEDERANILEELQLGLKGYTYLEDFS</sequence>
<organism>
    <name type="scientific">Shewanella halifaxensis (strain HAW-EB4)</name>
    <dbReference type="NCBI Taxonomy" id="458817"/>
    <lineage>
        <taxon>Bacteria</taxon>
        <taxon>Pseudomonadati</taxon>
        <taxon>Pseudomonadota</taxon>
        <taxon>Gammaproteobacteria</taxon>
        <taxon>Alteromonadales</taxon>
        <taxon>Shewanellaceae</taxon>
        <taxon>Shewanella</taxon>
    </lineage>
</organism>
<feature type="chain" id="PRO_1000087407" description="Biosynthetic arginine decarboxylase">
    <location>
        <begin position="1"/>
        <end position="637"/>
    </location>
</feature>
<feature type="binding site" evidence="1">
    <location>
        <begin position="286"/>
        <end position="296"/>
    </location>
    <ligand>
        <name>substrate</name>
    </ligand>
</feature>
<feature type="modified residue" description="N6-(pyridoxal phosphate)lysine" evidence="1">
    <location>
        <position position="101"/>
    </location>
</feature>
<evidence type="ECO:0000255" key="1">
    <source>
        <dbReference type="HAMAP-Rule" id="MF_01417"/>
    </source>
</evidence>
<name>SPEA_SHEHH</name>